<name>MAMA_MAGGM</name>
<evidence type="ECO:0000250" key="1">
    <source>
        <dbReference type="UniProtKB" id="Q2W8Q0"/>
    </source>
</evidence>
<evidence type="ECO:0000255" key="2">
    <source>
        <dbReference type="PROSITE-ProRule" id="PRU00339"/>
    </source>
</evidence>
<evidence type="ECO:0000269" key="3">
    <source>
    </source>
</evidence>
<evidence type="ECO:0000269" key="4">
    <source>
    </source>
</evidence>
<evidence type="ECO:0000269" key="5">
    <source>
    </source>
</evidence>
<evidence type="ECO:0000269" key="6">
    <source>
    </source>
</evidence>
<evidence type="ECO:0000269" key="7">
    <source>
    </source>
</evidence>
<evidence type="ECO:0000269" key="8">
    <source>
    </source>
</evidence>
<evidence type="ECO:0000303" key="9">
    <source>
    </source>
</evidence>
<evidence type="ECO:0000305" key="10"/>
<evidence type="ECO:0000305" key="11">
    <source>
    </source>
</evidence>
<evidence type="ECO:0000305" key="12">
    <source>
    </source>
</evidence>
<evidence type="ECO:0000305" key="13">
    <source>
    </source>
</evidence>
<evidence type="ECO:0000305" key="14">
    <source>
    </source>
</evidence>
<evidence type="ECO:0000305" key="15">
    <source>
    </source>
</evidence>
<evidence type="ECO:0007744" key="16">
    <source>
        <dbReference type="PDB" id="3AS8"/>
    </source>
</evidence>
<evidence type="ECO:0007744" key="17">
    <source>
        <dbReference type="PDB" id="3ASF"/>
    </source>
</evidence>
<evidence type="ECO:0007829" key="18">
    <source>
        <dbReference type="PDB" id="3AS8"/>
    </source>
</evidence>
<proteinExistence type="evidence at protein level"/>
<reference key="1">
    <citation type="journal article" date="2001" name="Appl. Environ. Microbiol.">
        <title>A large gene cluster encoding several magnetosome proteins is conserved in different species of magnetotactic bacteria.</title>
        <authorList>
            <person name="Grunberg K."/>
            <person name="Wawer C."/>
            <person name="Tebo B.M."/>
            <person name="Schuler D."/>
        </authorList>
    </citation>
    <scope>NUCLEOTIDE SEQUENCE [GENOMIC DNA]</scope>
    <scope>PROTEIN SEQUENCE OF 4-23</scope>
    <scope>SUBCELLULAR LOCATION</scope>
    <source>
        <strain>DSM 6361 / JCM 21280 / NBRC 15271 / MSR-1</strain>
    </source>
</reference>
<reference key="2">
    <citation type="journal article" date="2003" name="J. Bacteriol.">
        <title>Characterization of a spontaneous nonmagnetic mutant of Magnetospirillum gryphiswaldense reveals a large deletion comprising a putative magnetosome island.</title>
        <authorList>
            <person name="Schuebbe S."/>
            <person name="Kube M."/>
            <person name="Scheffel A."/>
            <person name="Wawer C."/>
            <person name="Heyen U."/>
            <person name="Meyerdierks A."/>
            <person name="Madkour M.H."/>
            <person name="Mayer F."/>
            <person name="Reinhardt R."/>
            <person name="Schueler D."/>
        </authorList>
    </citation>
    <scope>NUCLEOTIDE SEQUENCE [GENOMIC DNA]</scope>
    <scope>PROBABLE OPERON</scope>
    <scope>DISRUPTION PHENOTYPE</scope>
    <source>
        <strain>DSM 6361 / JCM 21280 / NBRC 15271 / MSR-1</strain>
    </source>
</reference>
<reference key="3">
    <citation type="journal article" date="2005" name="J. Bacteriol.">
        <title>A hypervariable 130-kilobase genomic region of Magnetospirillum gryphiswaldense comprises a magnetosome island which undergoes frequent rearrangements during stationary growth.</title>
        <authorList>
            <person name="Ullrich S."/>
            <person name="Kube M."/>
            <person name="Schuebbe S."/>
            <person name="Reinhardt R."/>
            <person name="Schueler D."/>
        </authorList>
    </citation>
    <scope>NUCLEOTIDE SEQUENCE [GENOMIC DNA]</scope>
    <source>
        <strain>DSM 6361 / JCM 21280 / NBRC 15271 / MSR-1</strain>
    </source>
</reference>
<reference key="4">
    <citation type="journal article" date="2007" name="J. Bacteriol.">
        <title>Comparative genome analysis of four magnetotactic bacteria reveals a complex set of group-specific genes implicated in magnetosome biomineralization and function.</title>
        <authorList>
            <person name="Richter M."/>
            <person name="Kube M."/>
            <person name="Bazylinski D.A."/>
            <person name="Lombardot T."/>
            <person name="Gloeckner F.O."/>
            <person name="Reinhardt R."/>
            <person name="Schueler D."/>
        </authorList>
    </citation>
    <scope>NUCLEOTIDE SEQUENCE [LARGE SCALE GENOMIC DNA]</scope>
    <source>
        <strain>DSM 6361 / JCM 21280 / NBRC 15271 / MSR-1</strain>
    </source>
</reference>
<reference key="5">
    <citation type="journal article" date="2014" name="Genome Announc.">
        <title>Complete genome sequence of Magnetospirillum gryphiswaldense MSR-1.</title>
        <authorList>
            <person name="Wang X."/>
            <person name="Wang Q."/>
            <person name="Zhang W."/>
            <person name="Wang Y."/>
            <person name="Li L."/>
            <person name="Wen T."/>
            <person name="Zhang T."/>
            <person name="Zhang Y."/>
            <person name="Xu J."/>
            <person name="Hu J."/>
            <person name="Li S."/>
            <person name="Liu L."/>
            <person name="Liu J."/>
            <person name="Jiang W."/>
            <person name="Tian J."/>
            <person name="Li Y."/>
            <person name="Schuler D."/>
            <person name="Wang L."/>
            <person name="Li J."/>
        </authorList>
    </citation>
    <scope>NUCLEOTIDE SEQUENCE [LARGE SCALE GENOMIC DNA]</scope>
    <source>
        <strain>DSM 6361 / JCM 21280 / NBRC 15271 / MSR-1</strain>
    </source>
</reference>
<reference key="6">
    <citation type="journal article" date="2004" name="Appl. Environ. Microbiol.">
        <title>Biochemical and proteomic analysis of the magnetosome membrane in Magnetospirillum gryphiswaldense.</title>
        <authorList>
            <person name="Gruenberg K."/>
            <person name="Mueller E.C."/>
            <person name="Otto A."/>
            <person name="Reszka R."/>
            <person name="Linder D."/>
            <person name="Kube M."/>
            <person name="Reinhardt R."/>
            <person name="Schueler D."/>
        </authorList>
    </citation>
    <scope>PROTEIN SEQUENCE OF 1-12</scope>
    <scope>SUBCELLULAR LOCATION</scope>
    <scope>IDENTIFICATION BY MASS SPECTROMETRY</scope>
    <source>
        <strain>DSM 6361 / JCM 21280 / NBRC 15271 / MSR-1</strain>
    </source>
</reference>
<reference key="7">
    <citation type="journal article" date="2011" name="PLoS ONE">
        <title>Functional analysis of the magnetosome island in Magnetospirillum gryphiswaldense: the mamAB operon is sufficient for magnetite biomineralization.</title>
        <authorList>
            <person name="Lohsse A."/>
            <person name="Ullrich S."/>
            <person name="Katzmann E."/>
            <person name="Borg S."/>
            <person name="Wanner G."/>
            <person name="Richter M."/>
            <person name="Voigt B."/>
            <person name="Schweder T."/>
            <person name="Schueler D."/>
        </authorList>
    </citation>
    <scope>MINIMAL MAGNETOSOME ISLAND</scope>
    <source>
        <strain>DSM 6361 / JCM 21280 / NBRC 15271 / MSR-1</strain>
    </source>
</reference>
<reference key="8">
    <citation type="journal article" date="2014" name="J. Bacteriol.">
        <title>Genetic dissection of the mamAB and mms6 operons reveals a gene set essential for magnetosome biogenesis in Magnetospirillum gryphiswaldense.</title>
        <authorList>
            <person name="Lohsse A."/>
            <person name="Borg S."/>
            <person name="Raschdorf O."/>
            <person name="Kolinko I."/>
            <person name="Tompa E."/>
            <person name="Posfai M."/>
            <person name="Faivre D."/>
            <person name="Baumgartner J."/>
            <person name="Schueler D."/>
        </authorList>
    </citation>
    <scope>PROBABLE SUBUNIT</scope>
    <scope>DISRUPTION PHENOTYPE</scope>
    <source>
        <strain>DSM 6361 / JCM 21280 / NBRC 15271 / MSR-1</strain>
    </source>
</reference>
<reference evidence="16 17" key="9">
    <citation type="journal article" date="2011" name="Proc. Natl. Acad. Sci. U.S.A.">
        <title>Self-recognition mechanism of MamA, a magnetosome-associated TPR-containing protein, promotes complex assembly.</title>
        <authorList>
            <person name="Zeytuni N."/>
            <person name="Ozyamak E."/>
            <person name="Ben-Harush K."/>
            <person name="Davidov G."/>
            <person name="Levin M."/>
            <person name="Gat Y."/>
            <person name="Moyal T."/>
            <person name="Brik A."/>
            <person name="Komeili A."/>
            <person name="Zarivach R."/>
        </authorList>
    </citation>
    <scope>X-RAY CRYSTALLOGRAPHY (2.00 ANGSTROMS) OF 41-217</scope>
    <scope>POSSIBLE FUNCTION</scope>
    <scope>SUBUNIT</scope>
    <scope>DOMAIN</scope>
    <scope>MUTAGENESIS OF 1-MET--ASN-41 AND 1-MET--LEU-26</scope>
    <source>
        <strain>DSM 6361 / JCM 21280 / NBRC 15271 / MSR-1</strain>
    </source>
</reference>
<comment type="function">
    <text evidence="14">Probably forms a large homooligomer on which other magnetosome subunits assemble. Required for formation of functional magnetosomes from pre-existing vesicles.</text>
</comment>
<comment type="subunit">
    <text evidence="1 6 15">Forms round, 20 nm diameter complexes with a central cavity (PubMed:21784982). Probably binds MamC (Probable). Interacts with full-length Mms6 (By similarity).</text>
</comment>
<comment type="interaction">
    <interactant intactId="EBI-15937405">
        <id>Q93DY9</id>
    </interactant>
    <interactant intactId="EBI-15937405">
        <id>Q93DY9</id>
        <label>mamA</label>
    </interactant>
    <organismsDiffer>false</organismsDiffer>
    <experiments>2</experiments>
</comment>
<comment type="subcellular location">
    <subcellularLocation>
        <location evidence="3 5">Magnetosome membrane</location>
        <topology evidence="13">Peripheral membrane protein</topology>
    </subcellularLocation>
    <text evidence="1 3 5">Purified magnetosomes remain attached to each other (PubMed:11571158). Probably a peripheral membrane protein, it is solubilized by Tween 20 (PubMed:14766587). Forms oligomers that cover the surface of the magnetosome (By similarity).</text>
</comment>
<comment type="induction">
    <text evidence="12">Part of the probable 17 gene mamAB operon.</text>
</comment>
<comment type="domain">
    <text evidence="6">Protein missing TPR1 (residues 1-41) forms an N-terminal domain of TPR 2-3 and a C-terminal domain with TPR 4-6 which can move with respect to each other, hinged at D-112.</text>
</comment>
<comment type="disruption phenotype">
    <text evidence="4 8">Normal magnetic response, many fewer magnetosomes. MamC is mislocalized in punctate spots throughout the cell (PubMed:24816605). Deletion of approximately 80 kb of DNA, including this operon, leads to cells that are non-magnetic, lack internal membrane systems, grow poorly, have reduced mobility and take-up and accumulate iron poorly (PubMed:13129949).</text>
</comment>
<comment type="miscellaneous">
    <text evidence="3">The second most abundant protein in purified magnetosomes.</text>
</comment>
<comment type="miscellaneous">
    <text evidence="11">This bacteria makes up to 60 cubo-octahedral magnetosomes of about 45 nm in diameter which contain membrane-bound crystals of magnetite (Fe(3)O(4)).</text>
</comment>
<comment type="miscellaneous">
    <text evidence="7">Expression of just the minimal mamAB gene cluster (MGMSRv2__2365 to MGMSRv2__2381), including this gene, is sufficient to form a minimal magnetosome chain with small magnetite particles.</text>
</comment>
<comment type="similarity">
    <text evidence="10">Belongs to the magnetosome MamA family.</text>
</comment>
<gene>
    <name evidence="9" type="primary">mamA</name>
    <name type="ordered locus">MGMSRv2__2371</name>
    <name type="ORF">mgI495</name>
    <name type="ORF">MGR_4099</name>
</gene>
<accession>Q93DY9</accession>
<accession>V6F5J2</accession>
<protein>
    <recommendedName>
        <fullName evidence="10">Magnetosome protein MamA</fullName>
    </recommendedName>
    <alternativeName>
        <fullName evidence="9">MM24.3</fullName>
    </alternativeName>
</protein>
<feature type="chain" id="PRO_0000447732" description="Magnetosome protein MamA">
    <location>
        <begin position="1"/>
        <end position="217"/>
    </location>
</feature>
<feature type="repeat" description="TPR 1" evidence="14">
    <location>
        <begin position="12"/>
        <end position="44"/>
    </location>
</feature>
<feature type="repeat" description="TPR 2" evidence="2">
    <location>
        <begin position="46"/>
        <end position="79"/>
    </location>
</feature>
<feature type="repeat" description="TPR 3" evidence="2">
    <location>
        <begin position="80"/>
        <end position="113"/>
    </location>
</feature>
<feature type="repeat" description="TPR 4" evidence="2">
    <location>
        <begin position="114"/>
        <end position="147"/>
    </location>
</feature>
<feature type="repeat" description="TPR 5" evidence="2">
    <location>
        <begin position="148"/>
        <end position="181"/>
    </location>
</feature>
<feature type="repeat" description="TPR 6" evidence="2">
    <location>
        <begin position="182"/>
        <end position="215"/>
    </location>
</feature>
<feature type="region of interest" description="N-terminal domain" evidence="14">
    <location>
        <begin position="41"/>
        <end position="112"/>
    </location>
</feature>
<feature type="region of interest" description="C-terminal domain" evidence="14">
    <location>
        <begin position="113"/>
        <end position="217"/>
    </location>
</feature>
<feature type="mutagenesis site" description="No longer forms homooligomeric complexes." evidence="6">
    <location>
        <begin position="1"/>
        <end position="41"/>
    </location>
</feature>
<feature type="mutagenesis site" description="Forms asymmetric and broken homooligomeric complexes." evidence="6">
    <location>
        <begin position="1"/>
        <end position="26"/>
    </location>
</feature>
<feature type="helix" evidence="18">
    <location>
        <begin position="43"/>
        <end position="58"/>
    </location>
</feature>
<feature type="helix" evidence="18">
    <location>
        <begin position="62"/>
        <end position="69"/>
    </location>
</feature>
<feature type="turn" evidence="18">
    <location>
        <begin position="70"/>
        <end position="72"/>
    </location>
</feature>
<feature type="strand" evidence="18">
    <location>
        <begin position="75"/>
        <end position="77"/>
    </location>
</feature>
<feature type="helix" evidence="18">
    <location>
        <begin position="80"/>
        <end position="92"/>
    </location>
</feature>
<feature type="helix" evidence="18">
    <location>
        <begin position="96"/>
        <end position="109"/>
    </location>
</feature>
<feature type="helix" evidence="18">
    <location>
        <begin position="114"/>
        <end position="126"/>
    </location>
</feature>
<feature type="helix" evidence="18">
    <location>
        <begin position="130"/>
        <end position="143"/>
    </location>
</feature>
<feature type="helix" evidence="18">
    <location>
        <begin position="148"/>
        <end position="160"/>
    </location>
</feature>
<feature type="helix" evidence="18">
    <location>
        <begin position="164"/>
        <end position="177"/>
    </location>
</feature>
<feature type="helix" evidence="18">
    <location>
        <begin position="182"/>
        <end position="194"/>
    </location>
</feature>
<feature type="helix" evidence="18">
    <location>
        <begin position="198"/>
        <end position="217"/>
    </location>
</feature>
<keyword id="KW-0002">3D-structure</keyword>
<keyword id="KW-0091">Biomineralization</keyword>
<keyword id="KW-0903">Direct protein sequencing</keyword>
<keyword id="KW-1281">Magnetosome</keyword>
<keyword id="KW-0472">Membrane</keyword>
<keyword id="KW-1185">Reference proteome</keyword>
<keyword id="KW-0677">Repeat</keyword>
<keyword id="KW-0802">TPR repeat</keyword>
<organism>
    <name type="scientific">Magnetospirillum gryphiswaldense (strain DSM 6361 / JCM 21280 / NBRC 15271 / MSR-1)</name>
    <dbReference type="NCBI Taxonomy" id="431944"/>
    <lineage>
        <taxon>Bacteria</taxon>
        <taxon>Pseudomonadati</taxon>
        <taxon>Pseudomonadota</taxon>
        <taxon>Alphaproteobacteria</taxon>
        <taxon>Rhodospirillales</taxon>
        <taxon>Rhodospirillaceae</taxon>
        <taxon>Magnetospirillum</taxon>
    </lineage>
</organism>
<dbReference type="EMBL" id="AF374354">
    <property type="protein sequence ID" value="AAL09996.1"/>
    <property type="molecule type" value="Genomic_DNA"/>
</dbReference>
<dbReference type="EMBL" id="BX571797">
    <property type="protein sequence ID" value="CAE12040.1"/>
    <property type="molecule type" value="Genomic_DNA"/>
</dbReference>
<dbReference type="EMBL" id="AM085146">
    <property type="protein sequence ID" value="CAJ30124.1"/>
    <property type="molecule type" value="Genomic_DNA"/>
</dbReference>
<dbReference type="EMBL" id="CU459003">
    <property type="protein sequence ID" value="CAM78031.1"/>
    <property type="molecule type" value="Genomic_DNA"/>
</dbReference>
<dbReference type="EMBL" id="HG794546">
    <property type="protein sequence ID" value="CDK99586.1"/>
    <property type="molecule type" value="Genomic_DNA"/>
</dbReference>
<dbReference type="RefSeq" id="WP_024080582.1">
    <property type="nucleotide sequence ID" value="NZ_CP027526.1"/>
</dbReference>
<dbReference type="PDB" id="3AS8">
    <property type="method" value="X-ray"/>
    <property type="resolution" value="2.00 A"/>
    <property type="chains" value="A=41-217"/>
</dbReference>
<dbReference type="PDB" id="3ASF">
    <property type="method" value="X-ray"/>
    <property type="resolution" value="2.39 A"/>
    <property type="chains" value="A/B=41-217"/>
</dbReference>
<dbReference type="PDBsum" id="3AS8"/>
<dbReference type="PDBsum" id="3ASF"/>
<dbReference type="SMR" id="Q93DY9"/>
<dbReference type="DIP" id="DIP-60389N"/>
<dbReference type="STRING" id="1430440.MGMSRv2__2371"/>
<dbReference type="KEGG" id="mgry:MSR1_03440"/>
<dbReference type="KEGG" id="mgy:MGMSRv2__2371"/>
<dbReference type="eggNOG" id="COG0457">
    <property type="taxonomic scope" value="Bacteria"/>
</dbReference>
<dbReference type="HOGENOM" id="CLU_1271021_0_0_5"/>
<dbReference type="EvolutionaryTrace" id="Q93DY9"/>
<dbReference type="Proteomes" id="UP000018922">
    <property type="component" value="Chromosome I"/>
</dbReference>
<dbReference type="GO" id="GO:0110143">
    <property type="term" value="C:magnetosome"/>
    <property type="evidence" value="ECO:0000314"/>
    <property type="project" value="UniProtKB"/>
</dbReference>
<dbReference type="GO" id="GO:0110146">
    <property type="term" value="C:magnetosome membrane"/>
    <property type="evidence" value="ECO:0007669"/>
    <property type="project" value="UniProtKB-SubCell"/>
</dbReference>
<dbReference type="GO" id="GO:0042802">
    <property type="term" value="F:identical protein binding"/>
    <property type="evidence" value="ECO:0000353"/>
    <property type="project" value="IntAct"/>
</dbReference>
<dbReference type="GO" id="GO:0140923">
    <property type="term" value="P:magnetosome assembly"/>
    <property type="evidence" value="ECO:0000315"/>
    <property type="project" value="UniProtKB"/>
</dbReference>
<dbReference type="FunFam" id="1.25.40.10:FF:001005">
    <property type="entry name" value="Magnetosome protein MamA"/>
    <property type="match status" value="1"/>
</dbReference>
<dbReference type="Gene3D" id="1.25.40.10">
    <property type="entry name" value="Tetratricopeptide repeat domain"/>
    <property type="match status" value="1"/>
</dbReference>
<dbReference type="InterPro" id="IPR011990">
    <property type="entry name" value="TPR-like_helical_dom_sf"/>
</dbReference>
<dbReference type="InterPro" id="IPR019734">
    <property type="entry name" value="TPR_rpt"/>
</dbReference>
<dbReference type="InterPro" id="IPR050498">
    <property type="entry name" value="Ycf3"/>
</dbReference>
<dbReference type="NCBIfam" id="NF040959">
    <property type="entry name" value="MamA"/>
    <property type="match status" value="1"/>
</dbReference>
<dbReference type="PANTHER" id="PTHR44858">
    <property type="entry name" value="TETRATRICOPEPTIDE REPEAT PROTEIN 6"/>
    <property type="match status" value="1"/>
</dbReference>
<dbReference type="PANTHER" id="PTHR44858:SF1">
    <property type="entry name" value="UDP-N-ACETYLGLUCOSAMINE--PEPTIDE N-ACETYLGLUCOSAMINYLTRANSFERASE SPINDLY-RELATED"/>
    <property type="match status" value="1"/>
</dbReference>
<dbReference type="Pfam" id="PF13432">
    <property type="entry name" value="TPR_16"/>
    <property type="match status" value="2"/>
</dbReference>
<dbReference type="Pfam" id="PF13181">
    <property type="entry name" value="TPR_8"/>
    <property type="match status" value="1"/>
</dbReference>
<dbReference type="SMART" id="SM00028">
    <property type="entry name" value="TPR"/>
    <property type="match status" value="5"/>
</dbReference>
<dbReference type="SUPFAM" id="SSF48452">
    <property type="entry name" value="TPR-like"/>
    <property type="match status" value="1"/>
</dbReference>
<dbReference type="PROSITE" id="PS50005">
    <property type="entry name" value="TPR"/>
    <property type="match status" value="5"/>
</dbReference>
<dbReference type="PROSITE" id="PS50293">
    <property type="entry name" value="TPR_REGION"/>
    <property type="match status" value="1"/>
</dbReference>
<sequence length="217" mass="24012">MSSKPSNMLDEVTLYTHYGLSVAKKLGANMVDAFRSAFSVNDDIRQVYYRDKGISHAKAGRYSEAVVMLEQVYDADAFDVEVALHLGIAYVKTGAVDRGTELLERSIADAPDNIKVATVLGLTYVQVQKYDLAVPLLVKVAEANPVNFNVRFRLGVALDNLGRFDEAIDSFKIALGLRPNEGKVHRAIAYSYEQMGSHEEALPHFKKANELDERSAV</sequence>